<feature type="chain" id="PRO_0000313183" description="DNA ligase">
    <location>
        <begin position="1"/>
        <end position="662"/>
    </location>
</feature>
<feature type="domain" description="BRCT" evidence="1">
    <location>
        <begin position="583"/>
        <end position="662"/>
    </location>
</feature>
<feature type="active site" description="N6-AMP-lysine intermediate" evidence="1">
    <location>
        <position position="115"/>
    </location>
</feature>
<feature type="binding site" evidence="1">
    <location>
        <begin position="34"/>
        <end position="38"/>
    </location>
    <ligand>
        <name>NAD(+)</name>
        <dbReference type="ChEBI" id="CHEBI:57540"/>
    </ligand>
</feature>
<feature type="binding site" evidence="1">
    <location>
        <begin position="83"/>
        <end position="84"/>
    </location>
    <ligand>
        <name>NAD(+)</name>
        <dbReference type="ChEBI" id="CHEBI:57540"/>
    </ligand>
</feature>
<feature type="binding site" evidence="1">
    <location>
        <position position="113"/>
    </location>
    <ligand>
        <name>NAD(+)</name>
        <dbReference type="ChEBI" id="CHEBI:57540"/>
    </ligand>
</feature>
<feature type="binding site" evidence="1">
    <location>
        <position position="136"/>
    </location>
    <ligand>
        <name>NAD(+)</name>
        <dbReference type="ChEBI" id="CHEBI:57540"/>
    </ligand>
</feature>
<feature type="binding site" evidence="1">
    <location>
        <position position="172"/>
    </location>
    <ligand>
        <name>NAD(+)</name>
        <dbReference type="ChEBI" id="CHEBI:57540"/>
    </ligand>
</feature>
<feature type="binding site" evidence="1">
    <location>
        <position position="286"/>
    </location>
    <ligand>
        <name>NAD(+)</name>
        <dbReference type="ChEBI" id="CHEBI:57540"/>
    </ligand>
</feature>
<feature type="binding site" evidence="1">
    <location>
        <position position="310"/>
    </location>
    <ligand>
        <name>NAD(+)</name>
        <dbReference type="ChEBI" id="CHEBI:57540"/>
    </ligand>
</feature>
<feature type="binding site" evidence="1">
    <location>
        <position position="404"/>
    </location>
    <ligand>
        <name>Zn(2+)</name>
        <dbReference type="ChEBI" id="CHEBI:29105"/>
    </ligand>
</feature>
<feature type="binding site" evidence="1">
    <location>
        <position position="407"/>
    </location>
    <ligand>
        <name>Zn(2+)</name>
        <dbReference type="ChEBI" id="CHEBI:29105"/>
    </ligand>
</feature>
<feature type="binding site" evidence="1">
    <location>
        <position position="422"/>
    </location>
    <ligand>
        <name>Zn(2+)</name>
        <dbReference type="ChEBI" id="CHEBI:29105"/>
    </ligand>
</feature>
<feature type="binding site" evidence="1">
    <location>
        <position position="427"/>
    </location>
    <ligand>
        <name>Zn(2+)</name>
        <dbReference type="ChEBI" id="CHEBI:29105"/>
    </ligand>
</feature>
<proteinExistence type="inferred from homology"/>
<reference key="1">
    <citation type="journal article" date="2003" name="Nucleic Acids Res.">
        <title>Genome sequence of Chlamydophila caviae (Chlamydia psittaci GPIC): examining the role of niche-specific genes in the evolution of the Chlamydiaceae.</title>
        <authorList>
            <person name="Read T.D."/>
            <person name="Myers G.S.A."/>
            <person name="Brunham R.C."/>
            <person name="Nelson W.C."/>
            <person name="Paulsen I.T."/>
            <person name="Heidelberg J.F."/>
            <person name="Holtzapple E.K."/>
            <person name="Khouri H.M."/>
            <person name="Federova N.B."/>
            <person name="Carty H.A."/>
            <person name="Umayam L.A."/>
            <person name="Haft D.H."/>
            <person name="Peterson J.D."/>
            <person name="Beanan M.J."/>
            <person name="White O."/>
            <person name="Salzberg S.L."/>
            <person name="Hsia R.-C."/>
            <person name="McClarty G."/>
            <person name="Rank R.G."/>
            <person name="Bavoil P.M."/>
            <person name="Fraser C.M."/>
        </authorList>
    </citation>
    <scope>NUCLEOTIDE SEQUENCE [LARGE SCALE GENOMIC DNA]</scope>
    <source>
        <strain>ATCC VR-813 / DSM 19441 / 03DC25 / GPIC</strain>
    </source>
</reference>
<accession>Q822R2</accession>
<organism>
    <name type="scientific">Chlamydia caviae (strain ATCC VR-813 / DSM 19441 / 03DC25 / GPIC)</name>
    <name type="common">Chlamydophila caviae</name>
    <dbReference type="NCBI Taxonomy" id="227941"/>
    <lineage>
        <taxon>Bacteria</taxon>
        <taxon>Pseudomonadati</taxon>
        <taxon>Chlamydiota</taxon>
        <taxon>Chlamydiia</taxon>
        <taxon>Chlamydiales</taxon>
        <taxon>Chlamydiaceae</taxon>
        <taxon>Chlamydia/Chlamydophila group</taxon>
        <taxon>Chlamydia</taxon>
    </lineage>
</organism>
<sequence length="662" mass="74056">MESMYSREQYLSLCKELEKDDYCYYVLHNAVISDYDYDMKMQKLLAIEAQHPEWKVLWSPSMRLGDRVSGNFPVVAHSHPMLSIANAYTLEELNDFFSRVEKTLGYAPIYTLELKIDGIAVAIRYEQGILVQALSRGNGQKGEDITANIRTIRSLPLRLPKDAPEFLEVRGEVFFKRETFEQINAAQRQAEKPEFANPRNAAGGTLKLLSAKEAAQRNLELSVYGSLSDENTESHYDNLMLCKRWGFPIFGQPRQCQTIAEVVKSLDEIEGLRDQLPMEIDGVVIKVDDVEAQKALGMTAKHYRWALAYKYAPERAETILENILIQVGRTGVLTPVAKLSPVFLSGSRVSRASLYNEEEIERKDIRIGDTVYVEKGGEIIPKVVGVCLEKRPEGTQPWVMPEFCPVCHGKVTRESDKVSVRCTNPLCSAGAIEKIRFFVGRGALDIDHLGEKVITKLFDLGVIHRCCDIFKITEEDLLQVPGFKDKSVKNVLKSIEKAKQAPLDRFIAALGIPYVGVRVASALAQHFLNLEAVMGASLEELKSIEGIGDKVAESIEAYFNQQDTIEEIQKMLSLGVNVLPYHRESSSCLGKTFVITGTLKKMTRSEAEASIRNCGGKVGSSVSKSTDYLVVGEDPGSKFKKAQELEIPILNENDLLKILYPN</sequence>
<protein>
    <recommendedName>
        <fullName evidence="1">DNA ligase</fullName>
        <ecNumber evidence="1">6.5.1.2</ecNumber>
    </recommendedName>
    <alternativeName>
        <fullName evidence="1">Polydeoxyribonucleotide synthase [NAD(+)]</fullName>
    </alternativeName>
</protein>
<name>DNLJ_CHLCV</name>
<dbReference type="EC" id="6.5.1.2" evidence="1"/>
<dbReference type="EMBL" id="AE015925">
    <property type="protein sequence ID" value="AAP05359.1"/>
    <property type="molecule type" value="Genomic_DNA"/>
</dbReference>
<dbReference type="RefSeq" id="WP_011006574.1">
    <property type="nucleotide sequence ID" value="NC_003361.3"/>
</dbReference>
<dbReference type="SMR" id="Q822R2"/>
<dbReference type="STRING" id="227941.CCA_00617"/>
<dbReference type="KEGG" id="cca:CCA_00617"/>
<dbReference type="eggNOG" id="COG0272">
    <property type="taxonomic scope" value="Bacteria"/>
</dbReference>
<dbReference type="HOGENOM" id="CLU_007764_2_1_0"/>
<dbReference type="OrthoDB" id="9759736at2"/>
<dbReference type="Proteomes" id="UP000002193">
    <property type="component" value="Chromosome"/>
</dbReference>
<dbReference type="GO" id="GO:0005829">
    <property type="term" value="C:cytosol"/>
    <property type="evidence" value="ECO:0007669"/>
    <property type="project" value="TreeGrafter"/>
</dbReference>
<dbReference type="GO" id="GO:0003677">
    <property type="term" value="F:DNA binding"/>
    <property type="evidence" value="ECO:0007669"/>
    <property type="project" value="InterPro"/>
</dbReference>
<dbReference type="GO" id="GO:0003911">
    <property type="term" value="F:DNA ligase (NAD+) activity"/>
    <property type="evidence" value="ECO:0007669"/>
    <property type="project" value="UniProtKB-UniRule"/>
</dbReference>
<dbReference type="GO" id="GO:0046872">
    <property type="term" value="F:metal ion binding"/>
    <property type="evidence" value="ECO:0007669"/>
    <property type="project" value="UniProtKB-KW"/>
</dbReference>
<dbReference type="GO" id="GO:0006281">
    <property type="term" value="P:DNA repair"/>
    <property type="evidence" value="ECO:0007669"/>
    <property type="project" value="UniProtKB-KW"/>
</dbReference>
<dbReference type="GO" id="GO:0006260">
    <property type="term" value="P:DNA replication"/>
    <property type="evidence" value="ECO:0007669"/>
    <property type="project" value="UniProtKB-KW"/>
</dbReference>
<dbReference type="CDD" id="cd17748">
    <property type="entry name" value="BRCT_DNA_ligase_like"/>
    <property type="match status" value="1"/>
</dbReference>
<dbReference type="CDD" id="cd00114">
    <property type="entry name" value="LIGANc"/>
    <property type="match status" value="1"/>
</dbReference>
<dbReference type="FunFam" id="1.10.150.20:FF:000006">
    <property type="entry name" value="DNA ligase"/>
    <property type="match status" value="1"/>
</dbReference>
<dbReference type="FunFam" id="2.40.50.140:FF:000012">
    <property type="entry name" value="DNA ligase"/>
    <property type="match status" value="1"/>
</dbReference>
<dbReference type="Gene3D" id="6.20.10.30">
    <property type="match status" value="1"/>
</dbReference>
<dbReference type="Gene3D" id="1.10.150.20">
    <property type="entry name" value="5' to 3' exonuclease, C-terminal subdomain"/>
    <property type="match status" value="2"/>
</dbReference>
<dbReference type="Gene3D" id="3.40.50.10190">
    <property type="entry name" value="BRCT domain"/>
    <property type="match status" value="1"/>
</dbReference>
<dbReference type="Gene3D" id="3.30.470.30">
    <property type="entry name" value="DNA ligase/mRNA capping enzyme"/>
    <property type="match status" value="1"/>
</dbReference>
<dbReference type="Gene3D" id="1.10.287.610">
    <property type="entry name" value="Helix hairpin bin"/>
    <property type="match status" value="1"/>
</dbReference>
<dbReference type="Gene3D" id="2.40.50.140">
    <property type="entry name" value="Nucleic acid-binding proteins"/>
    <property type="match status" value="1"/>
</dbReference>
<dbReference type="HAMAP" id="MF_01588">
    <property type="entry name" value="DNA_ligase_A"/>
    <property type="match status" value="1"/>
</dbReference>
<dbReference type="InterPro" id="IPR001357">
    <property type="entry name" value="BRCT_dom"/>
</dbReference>
<dbReference type="InterPro" id="IPR036420">
    <property type="entry name" value="BRCT_dom_sf"/>
</dbReference>
<dbReference type="InterPro" id="IPR041663">
    <property type="entry name" value="DisA/LigA_HHH"/>
</dbReference>
<dbReference type="InterPro" id="IPR001679">
    <property type="entry name" value="DNA_ligase"/>
</dbReference>
<dbReference type="InterPro" id="IPR018239">
    <property type="entry name" value="DNA_ligase_AS"/>
</dbReference>
<dbReference type="InterPro" id="IPR033136">
    <property type="entry name" value="DNA_ligase_CS"/>
</dbReference>
<dbReference type="InterPro" id="IPR013839">
    <property type="entry name" value="DNAligase_adenylation"/>
</dbReference>
<dbReference type="InterPro" id="IPR013840">
    <property type="entry name" value="DNAligase_N"/>
</dbReference>
<dbReference type="InterPro" id="IPR003583">
    <property type="entry name" value="Hlx-hairpin-Hlx_DNA-bd_motif"/>
</dbReference>
<dbReference type="InterPro" id="IPR012340">
    <property type="entry name" value="NA-bd_OB-fold"/>
</dbReference>
<dbReference type="InterPro" id="IPR004150">
    <property type="entry name" value="NAD_DNA_ligase_OB"/>
</dbReference>
<dbReference type="InterPro" id="IPR010994">
    <property type="entry name" value="RuvA_2-like"/>
</dbReference>
<dbReference type="InterPro" id="IPR004149">
    <property type="entry name" value="Znf_DNAligase_C4"/>
</dbReference>
<dbReference type="NCBIfam" id="TIGR00575">
    <property type="entry name" value="dnlj"/>
    <property type="match status" value="1"/>
</dbReference>
<dbReference type="NCBIfam" id="NF005932">
    <property type="entry name" value="PRK07956.1"/>
    <property type="match status" value="1"/>
</dbReference>
<dbReference type="PANTHER" id="PTHR23389">
    <property type="entry name" value="CHROMOSOME TRANSMISSION FIDELITY FACTOR 18"/>
    <property type="match status" value="1"/>
</dbReference>
<dbReference type="PANTHER" id="PTHR23389:SF9">
    <property type="entry name" value="DNA LIGASE"/>
    <property type="match status" value="1"/>
</dbReference>
<dbReference type="Pfam" id="PF00533">
    <property type="entry name" value="BRCT"/>
    <property type="match status" value="1"/>
</dbReference>
<dbReference type="Pfam" id="PF01653">
    <property type="entry name" value="DNA_ligase_aden"/>
    <property type="match status" value="1"/>
</dbReference>
<dbReference type="Pfam" id="PF03120">
    <property type="entry name" value="DNA_ligase_OB"/>
    <property type="match status" value="1"/>
</dbReference>
<dbReference type="Pfam" id="PF03119">
    <property type="entry name" value="DNA_ligase_ZBD"/>
    <property type="match status" value="1"/>
</dbReference>
<dbReference type="Pfam" id="PF12826">
    <property type="entry name" value="HHH_2"/>
    <property type="match status" value="1"/>
</dbReference>
<dbReference type="PIRSF" id="PIRSF001604">
    <property type="entry name" value="LigA"/>
    <property type="match status" value="1"/>
</dbReference>
<dbReference type="SMART" id="SM00292">
    <property type="entry name" value="BRCT"/>
    <property type="match status" value="1"/>
</dbReference>
<dbReference type="SMART" id="SM00278">
    <property type="entry name" value="HhH1"/>
    <property type="match status" value="4"/>
</dbReference>
<dbReference type="SMART" id="SM00532">
    <property type="entry name" value="LIGANc"/>
    <property type="match status" value="1"/>
</dbReference>
<dbReference type="SUPFAM" id="SSF52113">
    <property type="entry name" value="BRCT domain"/>
    <property type="match status" value="1"/>
</dbReference>
<dbReference type="SUPFAM" id="SSF56091">
    <property type="entry name" value="DNA ligase/mRNA capping enzyme, catalytic domain"/>
    <property type="match status" value="1"/>
</dbReference>
<dbReference type="SUPFAM" id="SSF50249">
    <property type="entry name" value="Nucleic acid-binding proteins"/>
    <property type="match status" value="1"/>
</dbReference>
<dbReference type="SUPFAM" id="SSF47781">
    <property type="entry name" value="RuvA domain 2-like"/>
    <property type="match status" value="1"/>
</dbReference>
<dbReference type="PROSITE" id="PS50172">
    <property type="entry name" value="BRCT"/>
    <property type="match status" value="1"/>
</dbReference>
<dbReference type="PROSITE" id="PS01055">
    <property type="entry name" value="DNA_LIGASE_N1"/>
    <property type="match status" value="1"/>
</dbReference>
<dbReference type="PROSITE" id="PS01056">
    <property type="entry name" value="DNA_LIGASE_N2"/>
    <property type="match status" value="1"/>
</dbReference>
<evidence type="ECO:0000255" key="1">
    <source>
        <dbReference type="HAMAP-Rule" id="MF_01588"/>
    </source>
</evidence>
<comment type="function">
    <text evidence="1">DNA ligase that catalyzes the formation of phosphodiester linkages between 5'-phosphoryl and 3'-hydroxyl groups in double-stranded DNA using NAD as a coenzyme and as the energy source for the reaction. It is essential for DNA replication and repair of damaged DNA.</text>
</comment>
<comment type="catalytic activity">
    <reaction evidence="1">
        <text>NAD(+) + (deoxyribonucleotide)n-3'-hydroxyl + 5'-phospho-(deoxyribonucleotide)m = (deoxyribonucleotide)n+m + AMP + beta-nicotinamide D-nucleotide.</text>
        <dbReference type="EC" id="6.5.1.2"/>
    </reaction>
</comment>
<comment type="cofactor">
    <cofactor evidence="1">
        <name>Mg(2+)</name>
        <dbReference type="ChEBI" id="CHEBI:18420"/>
    </cofactor>
    <cofactor evidence="1">
        <name>Mn(2+)</name>
        <dbReference type="ChEBI" id="CHEBI:29035"/>
    </cofactor>
</comment>
<comment type="similarity">
    <text evidence="1">Belongs to the NAD-dependent DNA ligase family. LigA subfamily.</text>
</comment>
<keyword id="KW-0227">DNA damage</keyword>
<keyword id="KW-0234">DNA repair</keyword>
<keyword id="KW-0235">DNA replication</keyword>
<keyword id="KW-0436">Ligase</keyword>
<keyword id="KW-0460">Magnesium</keyword>
<keyword id="KW-0464">Manganese</keyword>
<keyword id="KW-0479">Metal-binding</keyword>
<keyword id="KW-0520">NAD</keyword>
<keyword id="KW-0862">Zinc</keyword>
<gene>
    <name evidence="1" type="primary">ligA</name>
    <name type="ordered locus">CCA_00617</name>
</gene>